<keyword id="KW-0349">Heme</keyword>
<keyword id="KW-0408">Iron</keyword>
<keyword id="KW-0479">Metal-binding</keyword>
<keyword id="KW-0503">Monooxygenase</keyword>
<keyword id="KW-0560">Oxidoreductase</keyword>
<dbReference type="EC" id="1.-.-.-" evidence="5"/>
<dbReference type="EMBL" id="KJ728786">
    <property type="protein sequence ID" value="AIA58896.1"/>
    <property type="molecule type" value="Genomic_DNA"/>
</dbReference>
<dbReference type="SMR" id="A0A068AA98"/>
<dbReference type="GO" id="GO:0020037">
    <property type="term" value="F:heme binding"/>
    <property type="evidence" value="ECO:0007669"/>
    <property type="project" value="InterPro"/>
</dbReference>
<dbReference type="GO" id="GO:0005506">
    <property type="term" value="F:iron ion binding"/>
    <property type="evidence" value="ECO:0007669"/>
    <property type="project" value="InterPro"/>
</dbReference>
<dbReference type="GO" id="GO:0004497">
    <property type="term" value="F:monooxygenase activity"/>
    <property type="evidence" value="ECO:0007669"/>
    <property type="project" value="UniProtKB-KW"/>
</dbReference>
<dbReference type="GO" id="GO:0016705">
    <property type="term" value="F:oxidoreductase activity, acting on paired donors, with incorporation or reduction of molecular oxygen"/>
    <property type="evidence" value="ECO:0007669"/>
    <property type="project" value="InterPro"/>
</dbReference>
<dbReference type="GO" id="GO:0043386">
    <property type="term" value="P:mycotoxin biosynthetic process"/>
    <property type="evidence" value="ECO:0007669"/>
    <property type="project" value="UniProtKB-ARBA"/>
</dbReference>
<dbReference type="CDD" id="cd11062">
    <property type="entry name" value="CYP58-like"/>
    <property type="match status" value="1"/>
</dbReference>
<dbReference type="Gene3D" id="1.10.630.10">
    <property type="entry name" value="Cytochrome P450"/>
    <property type="match status" value="1"/>
</dbReference>
<dbReference type="InterPro" id="IPR001128">
    <property type="entry name" value="Cyt_P450"/>
</dbReference>
<dbReference type="InterPro" id="IPR017972">
    <property type="entry name" value="Cyt_P450_CS"/>
</dbReference>
<dbReference type="InterPro" id="IPR002401">
    <property type="entry name" value="Cyt_P450_E_grp-I"/>
</dbReference>
<dbReference type="InterPro" id="IPR036396">
    <property type="entry name" value="Cyt_P450_sf"/>
</dbReference>
<dbReference type="InterPro" id="IPR050121">
    <property type="entry name" value="Cytochrome_P450_monoxygenase"/>
</dbReference>
<dbReference type="PANTHER" id="PTHR24305">
    <property type="entry name" value="CYTOCHROME P450"/>
    <property type="match status" value="1"/>
</dbReference>
<dbReference type="PANTHER" id="PTHR24305:SF157">
    <property type="entry name" value="N-ACETYLTRYPTOPHAN 6-HYDROXYLASE IVOC-RELATED"/>
    <property type="match status" value="1"/>
</dbReference>
<dbReference type="Pfam" id="PF00067">
    <property type="entry name" value="p450"/>
    <property type="match status" value="1"/>
</dbReference>
<dbReference type="PRINTS" id="PR00463">
    <property type="entry name" value="EP450I"/>
</dbReference>
<dbReference type="PRINTS" id="PR00385">
    <property type="entry name" value="P450"/>
</dbReference>
<dbReference type="SUPFAM" id="SSF48264">
    <property type="entry name" value="Cytochrome P450"/>
    <property type="match status" value="1"/>
</dbReference>
<dbReference type="PROSITE" id="PS00086">
    <property type="entry name" value="CYTOCHROME_P450"/>
    <property type="match status" value="1"/>
</dbReference>
<protein>
    <recommendedName>
        <fullName evidence="3">Cytochrome P450 monooxygenase orf4</fullName>
        <ecNumber evidence="5">1.-.-.-</ecNumber>
    </recommendedName>
    <alternativeName>
        <fullName evidence="3">Brefeldin A biosynthesis cluster protein orf4</fullName>
    </alternativeName>
</protein>
<gene>
    <name evidence="3" type="primary">orf4</name>
</gene>
<comment type="function">
    <text evidence="2">Cytochrome P450 monooxygenase; part of the gene cluster that mediates the biosynthesis of brefeldin A (BFA), a protein transport inhibitor that shows antiviral, antifungal, and antitumor properties (PubMed:24845309). The proposed biosynthesis of BFA involves formation of an acyclic polyketide chain that is differentially tailored throughout the backbone (PubMed:24845309). The highly reducing polyketide synthase Bref-PKS is proposed to synthesize the precisely reduced octaketide precursor, which could then be directly offloaded by the thiohydrolase enzyme Bref-TH followed by a cytochrome P450 monooxygenase-mediated formation of the cyclopentane ring and macrocyclization to afford 7-deoxy BFA. Alternatively, the first ring annulation can also occur on the ACP-tethered intermediate before the thiohydrolase release and lactonization (PubMed:24845309). The C7-hydroxylation by another cytochrome P450 monooxygenase is believed to be the final step in the process to obtain the final structure of BFA (PubMed:24845309). In addition to the HRPKS Bref-PKS and the thiohydrolase Bref-TH, the brefeldin A biosynthesis cluster contains 4 cytochrome p450 monooxygenases (called orf3 to orf6), as well a the probable cluster-specific transcription regulator orf8 (PubMed:24845309).</text>
</comment>
<comment type="cofactor">
    <cofactor evidence="1">
        <name>heme</name>
        <dbReference type="ChEBI" id="CHEBI:30413"/>
    </cofactor>
</comment>
<comment type="pathway">
    <text evidence="5">Mycotoxin biosynthesis.</text>
</comment>
<comment type="induction">
    <text evidence="2">Coexpressed with the other cluster genes on brefeldin A production optimized medium.</text>
</comment>
<comment type="similarity">
    <text evidence="4">Belongs to the cytochrome P450 family.</text>
</comment>
<feature type="chain" id="PRO_0000444932" description="Cytochrome P450 monooxygenase orf4">
    <location>
        <begin position="1"/>
        <end position="508"/>
    </location>
</feature>
<feature type="binding site" description="axial binding residue" evidence="1">
    <location>
        <position position="447"/>
    </location>
    <ligand>
        <name>heme</name>
        <dbReference type="ChEBI" id="CHEBI:30413"/>
    </ligand>
    <ligandPart>
        <name>Fe</name>
        <dbReference type="ChEBI" id="CHEBI:18248"/>
    </ligandPart>
</feature>
<reference key="1">
    <citation type="journal article" date="2014" name="ACS Chem. Biol.">
        <title>Fungal polyketide synthase product chain-length control by partnering thiohydrolase.</title>
        <authorList>
            <person name="Zabala A.O."/>
            <person name="Chooi Y.H."/>
            <person name="Choi M.S."/>
            <person name="Lin H.C."/>
            <person name="Tang Y."/>
        </authorList>
    </citation>
    <scope>NUCLEOTIDE SEQUENCE [GENOMIC DNA]</scope>
    <scope>FUNCTION</scope>
    <scope>INDUCTION</scope>
    <source>
        <strain>ATCC 58665</strain>
    </source>
</reference>
<name>BREF4_EUPBR</name>
<accession>A0A068AA98</accession>
<sequence length="508" mass="57951">MYHLIPFAAILGMTYALSLAIYRLFLSPLAKFPGPKLAAVTGWVETYYQLFYGEGGQFIFLYKEWHQKYGPIIRINPWEVHISDSCFFEILYSTNRPLKKLPHLAKVFDNELSGFSTVSPELHRIRRKAVSHLFSKGEVLKRGAQIQSAMDRLSERLKLDFLGHGNRVICMNDMWSVYTADLIAEYAFGRHYGFIDQPNFEADFTKALVHLLEPTHLAQQFPWLTDILKALPTSVLEFLHPHMAAFNKFKAANQVRIAKANFAKDLSKGGTMFSAIFNSDLPDEEKSIERAHQEALAFAAAGAETVAATLSVASFHLLHDPKIRRRLDEELATVVPDSRSSDASMPSLEILWQLPYLTGIINEALRLSYGSYARIPRTSDTPIQYDEWTIPPGVVFSMDIAPAHHDERIFPDSYSFKPERWLDNPQAFDGKPLTRYLFSFSRGTRSCLGMQLALAEMYIGIVSFFSRFDAHLFETDLTDITFVRDRFAPRPRIGSRGVRVNRLTTRKF</sequence>
<proteinExistence type="evidence at transcript level"/>
<evidence type="ECO:0000250" key="1">
    <source>
        <dbReference type="UniProtKB" id="P04798"/>
    </source>
</evidence>
<evidence type="ECO:0000269" key="2">
    <source>
    </source>
</evidence>
<evidence type="ECO:0000303" key="3">
    <source>
    </source>
</evidence>
<evidence type="ECO:0000305" key="4"/>
<evidence type="ECO:0000305" key="5">
    <source>
    </source>
</evidence>
<organism>
    <name type="scientific">Eupenicillium brefeldianum</name>
    <name type="common">Penicillium brefeldianum</name>
    <dbReference type="NCBI Taxonomy" id="1131482"/>
    <lineage>
        <taxon>Eukaryota</taxon>
        <taxon>Fungi</taxon>
        <taxon>Dikarya</taxon>
        <taxon>Ascomycota</taxon>
        <taxon>Pezizomycotina</taxon>
        <taxon>Eurotiomycetes</taxon>
        <taxon>Eurotiomycetidae</taxon>
        <taxon>Eurotiales</taxon>
        <taxon>Aspergillaceae</taxon>
        <taxon>Penicillium</taxon>
    </lineage>
</organism>